<reference key="1">
    <citation type="journal article" date="2002" name="Proc. Natl. Acad. Sci. U.S.A.">
        <title>Complete genome sequence of Clostridium perfringens, an anaerobic flesh-eater.</title>
        <authorList>
            <person name="Shimizu T."/>
            <person name="Ohtani K."/>
            <person name="Hirakawa H."/>
            <person name="Ohshima K."/>
            <person name="Yamashita A."/>
            <person name="Shiba T."/>
            <person name="Ogasawara N."/>
            <person name="Hattori M."/>
            <person name="Kuhara S."/>
            <person name="Hayashi H."/>
        </authorList>
    </citation>
    <scope>NUCLEOTIDE SEQUENCE [LARGE SCALE GENOMIC DNA]</scope>
    <source>
        <strain>13 / Type A</strain>
    </source>
</reference>
<comment type="function">
    <text evidence="1">Fluoride-specific ion channel. Important for reducing fluoride concentration in the cell, thus reducing its toxicity.</text>
</comment>
<comment type="catalytic activity">
    <reaction evidence="1">
        <text>fluoride(in) = fluoride(out)</text>
        <dbReference type="Rhea" id="RHEA:76159"/>
        <dbReference type="ChEBI" id="CHEBI:17051"/>
    </reaction>
    <physiologicalReaction direction="left-to-right" evidence="1">
        <dbReference type="Rhea" id="RHEA:76160"/>
    </physiologicalReaction>
</comment>
<comment type="activity regulation">
    <text evidence="1">Na(+) is not transported, but it plays an essential structural role and its presence is essential for fluoride channel function.</text>
</comment>
<comment type="subcellular location">
    <subcellularLocation>
        <location evidence="1">Cell membrane</location>
        <topology evidence="1">Multi-pass membrane protein</topology>
    </subcellularLocation>
</comment>
<comment type="similarity">
    <text evidence="1">Belongs to the fluoride channel Fluc/FEX (TC 1.A.43) family.</text>
</comment>
<dbReference type="EMBL" id="BA000016">
    <property type="protein sequence ID" value="BAB80735.1"/>
    <property type="molecule type" value="Genomic_DNA"/>
</dbReference>
<dbReference type="RefSeq" id="WP_011010186.1">
    <property type="nucleotide sequence ID" value="NC_003366.1"/>
</dbReference>
<dbReference type="SMR" id="Q8XLL2"/>
<dbReference type="STRING" id="195102.gene:10490292"/>
<dbReference type="KEGG" id="cpe:CPE1029"/>
<dbReference type="HOGENOM" id="CLU_114342_3_2_9"/>
<dbReference type="Proteomes" id="UP000000818">
    <property type="component" value="Chromosome"/>
</dbReference>
<dbReference type="GO" id="GO:0005886">
    <property type="term" value="C:plasma membrane"/>
    <property type="evidence" value="ECO:0007669"/>
    <property type="project" value="UniProtKB-SubCell"/>
</dbReference>
<dbReference type="GO" id="GO:0062054">
    <property type="term" value="F:fluoride channel activity"/>
    <property type="evidence" value="ECO:0007669"/>
    <property type="project" value="UniProtKB-UniRule"/>
</dbReference>
<dbReference type="GO" id="GO:0046872">
    <property type="term" value="F:metal ion binding"/>
    <property type="evidence" value="ECO:0007669"/>
    <property type="project" value="UniProtKB-KW"/>
</dbReference>
<dbReference type="GO" id="GO:0140114">
    <property type="term" value="P:cellular detoxification of fluoride"/>
    <property type="evidence" value="ECO:0007669"/>
    <property type="project" value="UniProtKB-UniRule"/>
</dbReference>
<dbReference type="HAMAP" id="MF_00454">
    <property type="entry name" value="FluC"/>
    <property type="match status" value="1"/>
</dbReference>
<dbReference type="InterPro" id="IPR003691">
    <property type="entry name" value="FluC"/>
</dbReference>
<dbReference type="InterPro" id="IPR036280">
    <property type="entry name" value="Multihaem_cyt_sf"/>
</dbReference>
<dbReference type="NCBIfam" id="TIGR00494">
    <property type="entry name" value="crcB"/>
    <property type="match status" value="1"/>
</dbReference>
<dbReference type="PANTHER" id="PTHR28259">
    <property type="entry name" value="FLUORIDE EXPORT PROTEIN 1-RELATED"/>
    <property type="match status" value="1"/>
</dbReference>
<dbReference type="PANTHER" id="PTHR28259:SF1">
    <property type="entry name" value="FLUORIDE EXPORT PROTEIN 1-RELATED"/>
    <property type="match status" value="1"/>
</dbReference>
<dbReference type="Pfam" id="PF02537">
    <property type="entry name" value="CRCB"/>
    <property type="match status" value="1"/>
</dbReference>
<dbReference type="SUPFAM" id="SSF48695">
    <property type="entry name" value="Multiheme cytochromes"/>
    <property type="match status" value="1"/>
</dbReference>
<sequence length="128" mass="13714">MQKLLLALIVGLGGFLGASLRYLISIFAAKNFGGNFPYGTLIANILGALLIGFIMEFSMDSALISSNMKLFLTTGIMGGLTTFSTFSYETISMLTNGNMTLGIENIILNLGCSLLFVVIGQKLARILF</sequence>
<feature type="chain" id="PRO_0000110088" description="Fluoride-specific ion channel FluC">
    <location>
        <begin position="1"/>
        <end position="128"/>
    </location>
</feature>
<feature type="transmembrane region" description="Helical" evidence="1">
    <location>
        <begin position="4"/>
        <end position="24"/>
    </location>
</feature>
<feature type="transmembrane region" description="Helical" evidence="1">
    <location>
        <begin position="39"/>
        <end position="59"/>
    </location>
</feature>
<feature type="transmembrane region" description="Helical" evidence="1">
    <location>
        <begin position="71"/>
        <end position="91"/>
    </location>
</feature>
<feature type="transmembrane region" description="Helical" evidence="1">
    <location>
        <begin position="99"/>
        <end position="119"/>
    </location>
</feature>
<feature type="binding site" evidence="1">
    <location>
        <position position="78"/>
    </location>
    <ligand>
        <name>Na(+)</name>
        <dbReference type="ChEBI" id="CHEBI:29101"/>
        <note>structural</note>
    </ligand>
</feature>
<feature type="binding site" evidence="1">
    <location>
        <position position="81"/>
    </location>
    <ligand>
        <name>Na(+)</name>
        <dbReference type="ChEBI" id="CHEBI:29101"/>
        <note>structural</note>
    </ligand>
</feature>
<accession>Q8XLL2</accession>
<evidence type="ECO:0000255" key="1">
    <source>
        <dbReference type="HAMAP-Rule" id="MF_00454"/>
    </source>
</evidence>
<proteinExistence type="inferred from homology"/>
<protein>
    <recommendedName>
        <fullName evidence="1">Fluoride-specific ion channel FluC</fullName>
    </recommendedName>
</protein>
<keyword id="KW-1003">Cell membrane</keyword>
<keyword id="KW-0407">Ion channel</keyword>
<keyword id="KW-0406">Ion transport</keyword>
<keyword id="KW-0472">Membrane</keyword>
<keyword id="KW-0479">Metal-binding</keyword>
<keyword id="KW-1185">Reference proteome</keyword>
<keyword id="KW-0915">Sodium</keyword>
<keyword id="KW-0812">Transmembrane</keyword>
<keyword id="KW-1133">Transmembrane helix</keyword>
<keyword id="KW-0813">Transport</keyword>
<gene>
    <name evidence="1" type="primary">fluC</name>
    <name evidence="1" type="synonym">crcB</name>
    <name type="ordered locus">CPE1029</name>
</gene>
<organism>
    <name type="scientific">Clostridium perfringens (strain 13 / Type A)</name>
    <dbReference type="NCBI Taxonomy" id="195102"/>
    <lineage>
        <taxon>Bacteria</taxon>
        <taxon>Bacillati</taxon>
        <taxon>Bacillota</taxon>
        <taxon>Clostridia</taxon>
        <taxon>Eubacteriales</taxon>
        <taxon>Clostridiaceae</taxon>
        <taxon>Clostridium</taxon>
    </lineage>
</organism>
<name>FLUC_CLOPE</name>